<sequence>MEGIILAAGKGTRMKSDLPKVVHEVAEKPMVLRVYEALVGAGVKRVVAVVGYRKEKVEEILRGRAVIAVQEEQLGTGHAALVAMPYVEDENVIIVPGDTPLLKASTLQALIKKHLETGAYATVLTCFLSNPYGYGRIVRDGYGKIIKIVEEKDATLEEKQIAEVNTGIYCFNTKILKEILPLLKAENAQKEYYLTDVIPLLLERGKVVETITIQDETEVYGVNDRVQLARLTKGVYRRKAEALMQEGVTIIDPETVYIGEEVVVGSDTVIYPNTYLEGKTVIGSGCRLGPNTRITDSVIGNNTEITFSVIIQARVGDEVNVGPFAYLRPGTEIANGVKIGDFVEIKKSFIGEGSKVPHLSYIGDAVVGKGVNIGAGTITCNYDGKNKWETVIEDGAFIGSNTNLVAPIKIGKNAVVGAGSTLTEDVPEKALAIARSRQVNKEDYVK</sequence>
<evidence type="ECO:0000255" key="1">
    <source>
        <dbReference type="HAMAP-Rule" id="MF_01631"/>
    </source>
</evidence>
<accession>Q3AFM0</accession>
<feature type="chain" id="PRO_0000233753" description="Bifunctional protein GlmU">
    <location>
        <begin position="1"/>
        <end position="446"/>
    </location>
</feature>
<feature type="region of interest" description="Pyrophosphorylase" evidence="1">
    <location>
        <begin position="1"/>
        <end position="225"/>
    </location>
</feature>
<feature type="region of interest" description="Linker" evidence="1">
    <location>
        <begin position="226"/>
        <end position="246"/>
    </location>
</feature>
<feature type="region of interest" description="N-acetyltransferase" evidence="1">
    <location>
        <begin position="247"/>
        <end position="446"/>
    </location>
</feature>
<feature type="active site" description="Proton acceptor" evidence="1">
    <location>
        <position position="358"/>
    </location>
</feature>
<feature type="binding site" evidence="1">
    <location>
        <begin position="6"/>
        <end position="9"/>
    </location>
    <ligand>
        <name>UDP-N-acetyl-alpha-D-glucosamine</name>
        <dbReference type="ChEBI" id="CHEBI:57705"/>
    </ligand>
</feature>
<feature type="binding site" evidence="1">
    <location>
        <position position="20"/>
    </location>
    <ligand>
        <name>UDP-N-acetyl-alpha-D-glucosamine</name>
        <dbReference type="ChEBI" id="CHEBI:57705"/>
    </ligand>
</feature>
<feature type="binding site" evidence="1">
    <location>
        <position position="70"/>
    </location>
    <ligand>
        <name>UDP-N-acetyl-alpha-D-glucosamine</name>
        <dbReference type="ChEBI" id="CHEBI:57705"/>
    </ligand>
</feature>
<feature type="binding site" evidence="1">
    <location>
        <begin position="75"/>
        <end position="76"/>
    </location>
    <ligand>
        <name>UDP-N-acetyl-alpha-D-glucosamine</name>
        <dbReference type="ChEBI" id="CHEBI:57705"/>
    </ligand>
</feature>
<feature type="binding site" evidence="1">
    <location>
        <position position="98"/>
    </location>
    <ligand>
        <name>Mg(2+)</name>
        <dbReference type="ChEBI" id="CHEBI:18420"/>
    </ligand>
</feature>
<feature type="binding site" evidence="1">
    <location>
        <position position="135"/>
    </location>
    <ligand>
        <name>UDP-N-acetyl-alpha-D-glucosamine</name>
        <dbReference type="ChEBI" id="CHEBI:57705"/>
    </ligand>
</feature>
<feature type="binding site" evidence="1">
    <location>
        <position position="150"/>
    </location>
    <ligand>
        <name>UDP-N-acetyl-alpha-D-glucosamine</name>
        <dbReference type="ChEBI" id="CHEBI:57705"/>
    </ligand>
</feature>
<feature type="binding site" evidence="1">
    <location>
        <position position="165"/>
    </location>
    <ligand>
        <name>UDP-N-acetyl-alpha-D-glucosamine</name>
        <dbReference type="ChEBI" id="CHEBI:57705"/>
    </ligand>
</feature>
<feature type="binding site" evidence="1">
    <location>
        <position position="223"/>
    </location>
    <ligand>
        <name>Mg(2+)</name>
        <dbReference type="ChEBI" id="CHEBI:18420"/>
    </ligand>
</feature>
<feature type="binding site" evidence="1">
    <location>
        <position position="223"/>
    </location>
    <ligand>
        <name>UDP-N-acetyl-alpha-D-glucosamine</name>
        <dbReference type="ChEBI" id="CHEBI:57705"/>
    </ligand>
</feature>
<feature type="binding site" evidence="1">
    <location>
        <position position="328"/>
    </location>
    <ligand>
        <name>UDP-N-acetyl-alpha-D-glucosamine</name>
        <dbReference type="ChEBI" id="CHEBI:57705"/>
    </ligand>
</feature>
<feature type="binding site" evidence="1">
    <location>
        <position position="346"/>
    </location>
    <ligand>
        <name>UDP-N-acetyl-alpha-D-glucosamine</name>
        <dbReference type="ChEBI" id="CHEBI:57705"/>
    </ligand>
</feature>
<feature type="binding site" evidence="1">
    <location>
        <position position="361"/>
    </location>
    <ligand>
        <name>UDP-N-acetyl-alpha-D-glucosamine</name>
        <dbReference type="ChEBI" id="CHEBI:57705"/>
    </ligand>
</feature>
<feature type="binding site" evidence="1">
    <location>
        <position position="372"/>
    </location>
    <ligand>
        <name>UDP-N-acetyl-alpha-D-glucosamine</name>
        <dbReference type="ChEBI" id="CHEBI:57705"/>
    </ligand>
</feature>
<feature type="binding site" evidence="1">
    <location>
        <position position="375"/>
    </location>
    <ligand>
        <name>acetyl-CoA</name>
        <dbReference type="ChEBI" id="CHEBI:57288"/>
    </ligand>
</feature>
<feature type="binding site" evidence="1">
    <location>
        <begin position="381"/>
        <end position="382"/>
    </location>
    <ligand>
        <name>acetyl-CoA</name>
        <dbReference type="ChEBI" id="CHEBI:57288"/>
    </ligand>
</feature>
<feature type="binding site" evidence="1">
    <location>
        <position position="400"/>
    </location>
    <ligand>
        <name>acetyl-CoA</name>
        <dbReference type="ChEBI" id="CHEBI:57288"/>
    </ligand>
</feature>
<feature type="binding site" evidence="1">
    <location>
        <position position="418"/>
    </location>
    <ligand>
        <name>acetyl-CoA</name>
        <dbReference type="ChEBI" id="CHEBI:57288"/>
    </ligand>
</feature>
<feature type="binding site" evidence="1">
    <location>
        <position position="435"/>
    </location>
    <ligand>
        <name>acetyl-CoA</name>
        <dbReference type="ChEBI" id="CHEBI:57288"/>
    </ligand>
</feature>
<proteinExistence type="inferred from homology"/>
<keyword id="KW-0012">Acyltransferase</keyword>
<keyword id="KW-0133">Cell shape</keyword>
<keyword id="KW-0961">Cell wall biogenesis/degradation</keyword>
<keyword id="KW-0963">Cytoplasm</keyword>
<keyword id="KW-0460">Magnesium</keyword>
<keyword id="KW-0479">Metal-binding</keyword>
<keyword id="KW-0511">Multifunctional enzyme</keyword>
<keyword id="KW-0548">Nucleotidyltransferase</keyword>
<keyword id="KW-0573">Peptidoglycan synthesis</keyword>
<keyword id="KW-1185">Reference proteome</keyword>
<keyword id="KW-0677">Repeat</keyword>
<keyword id="KW-0808">Transferase</keyword>
<comment type="function">
    <text evidence="1">Catalyzes the last two sequential reactions in the de novo biosynthetic pathway for UDP-N-acetylglucosamine (UDP-GlcNAc). The C-terminal domain catalyzes the transfer of acetyl group from acetyl coenzyme A to glucosamine-1-phosphate (GlcN-1-P) to produce N-acetylglucosamine-1-phosphate (GlcNAc-1-P), which is converted into UDP-GlcNAc by the transfer of uridine 5-monophosphate (from uridine 5-triphosphate), a reaction catalyzed by the N-terminal domain.</text>
</comment>
<comment type="catalytic activity">
    <reaction evidence="1">
        <text>alpha-D-glucosamine 1-phosphate + acetyl-CoA = N-acetyl-alpha-D-glucosamine 1-phosphate + CoA + H(+)</text>
        <dbReference type="Rhea" id="RHEA:13725"/>
        <dbReference type="ChEBI" id="CHEBI:15378"/>
        <dbReference type="ChEBI" id="CHEBI:57287"/>
        <dbReference type="ChEBI" id="CHEBI:57288"/>
        <dbReference type="ChEBI" id="CHEBI:57776"/>
        <dbReference type="ChEBI" id="CHEBI:58516"/>
        <dbReference type="EC" id="2.3.1.157"/>
    </reaction>
</comment>
<comment type="catalytic activity">
    <reaction evidence="1">
        <text>N-acetyl-alpha-D-glucosamine 1-phosphate + UTP + H(+) = UDP-N-acetyl-alpha-D-glucosamine + diphosphate</text>
        <dbReference type="Rhea" id="RHEA:13509"/>
        <dbReference type="ChEBI" id="CHEBI:15378"/>
        <dbReference type="ChEBI" id="CHEBI:33019"/>
        <dbReference type="ChEBI" id="CHEBI:46398"/>
        <dbReference type="ChEBI" id="CHEBI:57705"/>
        <dbReference type="ChEBI" id="CHEBI:57776"/>
        <dbReference type="EC" id="2.7.7.23"/>
    </reaction>
</comment>
<comment type="cofactor">
    <cofactor evidence="1">
        <name>Mg(2+)</name>
        <dbReference type="ChEBI" id="CHEBI:18420"/>
    </cofactor>
    <text evidence="1">Binds 1 Mg(2+) ion per subunit.</text>
</comment>
<comment type="pathway">
    <text evidence="1">Nucleotide-sugar biosynthesis; UDP-N-acetyl-alpha-D-glucosamine biosynthesis; N-acetyl-alpha-D-glucosamine 1-phosphate from alpha-D-glucosamine 6-phosphate (route II): step 2/2.</text>
</comment>
<comment type="pathway">
    <text evidence="1">Nucleotide-sugar biosynthesis; UDP-N-acetyl-alpha-D-glucosamine biosynthesis; UDP-N-acetyl-alpha-D-glucosamine from N-acetyl-alpha-D-glucosamine 1-phosphate: step 1/1.</text>
</comment>
<comment type="pathway">
    <text evidence="1">Bacterial outer membrane biogenesis; LPS lipid A biosynthesis.</text>
</comment>
<comment type="subunit">
    <text evidence="1">Homotrimer.</text>
</comment>
<comment type="subcellular location">
    <subcellularLocation>
        <location evidence="1">Cytoplasm</location>
    </subcellularLocation>
</comment>
<comment type="similarity">
    <text evidence="1">In the N-terminal section; belongs to the N-acetylglucosamine-1-phosphate uridyltransferase family.</text>
</comment>
<comment type="similarity">
    <text evidence="1">In the C-terminal section; belongs to the transferase hexapeptide repeat family.</text>
</comment>
<organism>
    <name type="scientific">Carboxydothermus hydrogenoformans (strain ATCC BAA-161 / DSM 6008 / Z-2901)</name>
    <dbReference type="NCBI Taxonomy" id="246194"/>
    <lineage>
        <taxon>Bacteria</taxon>
        <taxon>Bacillati</taxon>
        <taxon>Bacillota</taxon>
        <taxon>Clostridia</taxon>
        <taxon>Thermoanaerobacterales</taxon>
        <taxon>Thermoanaerobacteraceae</taxon>
        <taxon>Carboxydothermus</taxon>
    </lineage>
</organism>
<reference key="1">
    <citation type="journal article" date="2005" name="PLoS Genet.">
        <title>Life in hot carbon monoxide: the complete genome sequence of Carboxydothermus hydrogenoformans Z-2901.</title>
        <authorList>
            <person name="Wu M."/>
            <person name="Ren Q."/>
            <person name="Durkin A.S."/>
            <person name="Daugherty S.C."/>
            <person name="Brinkac L.M."/>
            <person name="Dodson R.J."/>
            <person name="Madupu R."/>
            <person name="Sullivan S.A."/>
            <person name="Kolonay J.F."/>
            <person name="Nelson W.C."/>
            <person name="Tallon L.J."/>
            <person name="Jones K.M."/>
            <person name="Ulrich L.E."/>
            <person name="Gonzalez J.M."/>
            <person name="Zhulin I.B."/>
            <person name="Robb F.T."/>
            <person name="Eisen J.A."/>
        </authorList>
    </citation>
    <scope>NUCLEOTIDE SEQUENCE [LARGE SCALE GENOMIC DNA]</scope>
    <source>
        <strain>ATCC BAA-161 / DSM 6008 / Z-2901</strain>
    </source>
</reference>
<dbReference type="EC" id="2.7.7.23" evidence="1"/>
<dbReference type="EC" id="2.3.1.157" evidence="1"/>
<dbReference type="EMBL" id="CP000141">
    <property type="protein sequence ID" value="ABB15469.1"/>
    <property type="molecule type" value="Genomic_DNA"/>
</dbReference>
<dbReference type="RefSeq" id="WP_011343140.1">
    <property type="nucleotide sequence ID" value="NC_007503.1"/>
</dbReference>
<dbReference type="SMR" id="Q3AFM0"/>
<dbReference type="FunCoup" id="Q3AFM0">
    <property type="interactions" value="322"/>
</dbReference>
<dbReference type="STRING" id="246194.CHY_0192"/>
<dbReference type="KEGG" id="chy:CHY_0192"/>
<dbReference type="eggNOG" id="COG1207">
    <property type="taxonomic scope" value="Bacteria"/>
</dbReference>
<dbReference type="HOGENOM" id="CLU_029499_15_2_9"/>
<dbReference type="InParanoid" id="Q3AFM0"/>
<dbReference type="OrthoDB" id="9775031at2"/>
<dbReference type="UniPathway" id="UPA00113">
    <property type="reaction ID" value="UER00532"/>
</dbReference>
<dbReference type="UniPathway" id="UPA00113">
    <property type="reaction ID" value="UER00533"/>
</dbReference>
<dbReference type="UniPathway" id="UPA00973"/>
<dbReference type="Proteomes" id="UP000002706">
    <property type="component" value="Chromosome"/>
</dbReference>
<dbReference type="GO" id="GO:0005737">
    <property type="term" value="C:cytoplasm"/>
    <property type="evidence" value="ECO:0007669"/>
    <property type="project" value="UniProtKB-SubCell"/>
</dbReference>
<dbReference type="GO" id="GO:0016020">
    <property type="term" value="C:membrane"/>
    <property type="evidence" value="ECO:0007669"/>
    <property type="project" value="GOC"/>
</dbReference>
<dbReference type="GO" id="GO:0019134">
    <property type="term" value="F:glucosamine-1-phosphate N-acetyltransferase activity"/>
    <property type="evidence" value="ECO:0007669"/>
    <property type="project" value="UniProtKB-UniRule"/>
</dbReference>
<dbReference type="GO" id="GO:0000287">
    <property type="term" value="F:magnesium ion binding"/>
    <property type="evidence" value="ECO:0007669"/>
    <property type="project" value="UniProtKB-UniRule"/>
</dbReference>
<dbReference type="GO" id="GO:0003977">
    <property type="term" value="F:UDP-N-acetylglucosamine diphosphorylase activity"/>
    <property type="evidence" value="ECO:0007669"/>
    <property type="project" value="UniProtKB-UniRule"/>
</dbReference>
<dbReference type="GO" id="GO:0000902">
    <property type="term" value="P:cell morphogenesis"/>
    <property type="evidence" value="ECO:0007669"/>
    <property type="project" value="UniProtKB-UniRule"/>
</dbReference>
<dbReference type="GO" id="GO:0071555">
    <property type="term" value="P:cell wall organization"/>
    <property type="evidence" value="ECO:0007669"/>
    <property type="project" value="UniProtKB-KW"/>
</dbReference>
<dbReference type="GO" id="GO:0009245">
    <property type="term" value="P:lipid A biosynthetic process"/>
    <property type="evidence" value="ECO:0007669"/>
    <property type="project" value="UniProtKB-UniRule"/>
</dbReference>
<dbReference type="GO" id="GO:0009252">
    <property type="term" value="P:peptidoglycan biosynthetic process"/>
    <property type="evidence" value="ECO:0007669"/>
    <property type="project" value="UniProtKB-UniRule"/>
</dbReference>
<dbReference type="GO" id="GO:0008360">
    <property type="term" value="P:regulation of cell shape"/>
    <property type="evidence" value="ECO:0007669"/>
    <property type="project" value="UniProtKB-KW"/>
</dbReference>
<dbReference type="GO" id="GO:0006048">
    <property type="term" value="P:UDP-N-acetylglucosamine biosynthetic process"/>
    <property type="evidence" value="ECO:0007669"/>
    <property type="project" value="UniProtKB-UniPathway"/>
</dbReference>
<dbReference type="CDD" id="cd02540">
    <property type="entry name" value="GT2_GlmU_N_bac"/>
    <property type="match status" value="1"/>
</dbReference>
<dbReference type="CDD" id="cd03353">
    <property type="entry name" value="LbH_GlmU_C"/>
    <property type="match status" value="1"/>
</dbReference>
<dbReference type="Gene3D" id="2.160.10.10">
    <property type="entry name" value="Hexapeptide repeat proteins"/>
    <property type="match status" value="1"/>
</dbReference>
<dbReference type="Gene3D" id="3.90.550.10">
    <property type="entry name" value="Spore Coat Polysaccharide Biosynthesis Protein SpsA, Chain A"/>
    <property type="match status" value="1"/>
</dbReference>
<dbReference type="HAMAP" id="MF_01631">
    <property type="entry name" value="GlmU"/>
    <property type="match status" value="1"/>
</dbReference>
<dbReference type="InterPro" id="IPR005882">
    <property type="entry name" value="Bifunctional_GlmU"/>
</dbReference>
<dbReference type="InterPro" id="IPR050065">
    <property type="entry name" value="GlmU-like"/>
</dbReference>
<dbReference type="InterPro" id="IPR038009">
    <property type="entry name" value="GlmU_C_LbH"/>
</dbReference>
<dbReference type="InterPro" id="IPR001451">
    <property type="entry name" value="Hexapep"/>
</dbReference>
<dbReference type="InterPro" id="IPR018357">
    <property type="entry name" value="Hexapep_transf_CS"/>
</dbReference>
<dbReference type="InterPro" id="IPR005835">
    <property type="entry name" value="NTP_transferase_dom"/>
</dbReference>
<dbReference type="InterPro" id="IPR029044">
    <property type="entry name" value="Nucleotide-diphossugar_trans"/>
</dbReference>
<dbReference type="InterPro" id="IPR011004">
    <property type="entry name" value="Trimer_LpxA-like_sf"/>
</dbReference>
<dbReference type="NCBIfam" id="TIGR01173">
    <property type="entry name" value="glmU"/>
    <property type="match status" value="1"/>
</dbReference>
<dbReference type="NCBIfam" id="NF010934">
    <property type="entry name" value="PRK14354.1"/>
    <property type="match status" value="1"/>
</dbReference>
<dbReference type="PANTHER" id="PTHR43584:SF3">
    <property type="entry name" value="BIFUNCTIONAL PROTEIN GLMU"/>
    <property type="match status" value="1"/>
</dbReference>
<dbReference type="PANTHER" id="PTHR43584">
    <property type="entry name" value="NUCLEOTIDYL TRANSFERASE"/>
    <property type="match status" value="1"/>
</dbReference>
<dbReference type="Pfam" id="PF00132">
    <property type="entry name" value="Hexapep"/>
    <property type="match status" value="3"/>
</dbReference>
<dbReference type="Pfam" id="PF00483">
    <property type="entry name" value="NTP_transferase"/>
    <property type="match status" value="1"/>
</dbReference>
<dbReference type="SUPFAM" id="SSF53448">
    <property type="entry name" value="Nucleotide-diphospho-sugar transferases"/>
    <property type="match status" value="1"/>
</dbReference>
<dbReference type="SUPFAM" id="SSF51161">
    <property type="entry name" value="Trimeric LpxA-like enzymes"/>
    <property type="match status" value="1"/>
</dbReference>
<dbReference type="PROSITE" id="PS00101">
    <property type="entry name" value="HEXAPEP_TRANSFERASES"/>
    <property type="match status" value="1"/>
</dbReference>
<protein>
    <recommendedName>
        <fullName evidence="1">Bifunctional protein GlmU</fullName>
    </recommendedName>
    <domain>
        <recommendedName>
            <fullName evidence="1">UDP-N-acetylglucosamine pyrophosphorylase</fullName>
            <ecNumber evidence="1">2.7.7.23</ecNumber>
        </recommendedName>
        <alternativeName>
            <fullName evidence="1">N-acetylglucosamine-1-phosphate uridyltransferase</fullName>
        </alternativeName>
    </domain>
    <domain>
        <recommendedName>
            <fullName evidence="1">Glucosamine-1-phosphate N-acetyltransferase</fullName>
            <ecNumber evidence="1">2.3.1.157</ecNumber>
        </recommendedName>
    </domain>
</protein>
<name>GLMU_CARHZ</name>
<gene>
    <name evidence="1" type="primary">glmU</name>
    <name type="ordered locus">CHY_0192</name>
</gene>